<feature type="signal peptide" evidence="3">
    <location>
        <begin position="1"/>
        <end position="20"/>
    </location>
</feature>
<feature type="chain" id="PRO_0000252330" description="Glucan endo-1,3-beta-glucosidase 2">
    <location>
        <begin position="21"/>
        <end position="477"/>
    </location>
</feature>
<feature type="propeptide" id="PRO_0000252331" description="Removed in mature form" evidence="3">
    <location>
        <begin position="478"/>
        <end position="505"/>
    </location>
</feature>
<feature type="active site" description="Proton donor" evidence="2">
    <location>
        <position position="125"/>
    </location>
</feature>
<feature type="active site" description="Nucleophile" evidence="2">
    <location>
        <position position="272"/>
    </location>
</feature>
<feature type="lipid moiety-binding region" description="GPI-anchor amidated serine" evidence="3">
    <location>
        <position position="477"/>
    </location>
</feature>
<feature type="glycosylation site" description="N-linked (GlcNAc...) asparagine" evidence="3">
    <location>
        <position position="97"/>
    </location>
</feature>
<feature type="glycosylation site" description="N-linked (GlcNAc...) asparagine" evidence="3">
    <location>
        <position position="180"/>
    </location>
</feature>
<feature type="glycosylation site" description="N-linked (GlcNAc...) asparagine" evidence="3">
    <location>
        <position position="262"/>
    </location>
</feature>
<feature type="glycosylation site" description="N-linked (GlcNAc...) asparagine" evidence="3">
    <location>
        <position position="304"/>
    </location>
</feature>
<feature type="glycosylation site" description="N-linked (GlcNAc...) asparagine" evidence="3">
    <location>
        <position position="361"/>
    </location>
</feature>
<feature type="glycosylation site" description="N-linked (GlcNAc...) asparagine" evidence="3">
    <location>
        <position position="365"/>
    </location>
</feature>
<feature type="glycosylation site" description="N-linked (GlcNAc...) asparagine" evidence="3">
    <location>
        <position position="461"/>
    </location>
</feature>
<feature type="glycosylation site" description="N-linked (GlcNAc...) asparagine" evidence="3">
    <location>
        <position position="466"/>
    </location>
</feature>
<feature type="glycosylation site" description="N-linked (GlcNAc...) asparagine" evidence="3">
    <location>
        <position position="473"/>
    </location>
</feature>
<feature type="disulfide bond" evidence="1">
    <location>
        <begin position="369"/>
        <end position="432"/>
    </location>
</feature>
<accession>Q9C7U5</accession>
<organism>
    <name type="scientific">Arabidopsis thaliana</name>
    <name type="common">Mouse-ear cress</name>
    <dbReference type="NCBI Taxonomy" id="3702"/>
    <lineage>
        <taxon>Eukaryota</taxon>
        <taxon>Viridiplantae</taxon>
        <taxon>Streptophyta</taxon>
        <taxon>Embryophyta</taxon>
        <taxon>Tracheophyta</taxon>
        <taxon>Spermatophyta</taxon>
        <taxon>Magnoliopsida</taxon>
        <taxon>eudicotyledons</taxon>
        <taxon>Gunneridae</taxon>
        <taxon>Pentapetalae</taxon>
        <taxon>rosids</taxon>
        <taxon>malvids</taxon>
        <taxon>Brassicales</taxon>
        <taxon>Brassicaceae</taxon>
        <taxon>Camelineae</taxon>
        <taxon>Arabidopsis</taxon>
    </lineage>
</organism>
<sequence>MASLLHLLLLSLSLLVLASASPSPPADEGSYIGVNIGTDLSDMPHPTQVVALLKAQEIRHIRLYNADPGLLIALANTGIKVIISIPNDQLLGIGQSNSTAANWVKRNVIAHYPATMITAVSVGSEVLTSLSNAAPVLVSAIKNVHAALLSANLDKLIKVSTPLSTSLILDPFPPSQAFFNRSLNAVIVPLLSFLQSTNSYLMVNVYPYIDYMQSNGVIPLDYALFKPIPPNKEAVDANTLVRYSNAFDAMVDATYFAMAFLNFTNIPVLVTESGWPSKGETNEPDATLDNANTYNSNLIRHVLNKTGTPKRPGIAVSTYIYELYNEDTKAGLSEKNWGLFNANGEPVYVLRLTNSGSVLANDTTNQTYCTAREGADTKMLQAALDWACGPGKIDCSPIKQGETCYEPDNVVAHANYAFDTYYHQTGNNPDACNFNGVASITTTDPSHGTCVFAGSRGNGRNGTSVNITAPSANSTTSSGIRSDLYYSRGIWSILTVMILNVANIL</sequence>
<gene>
    <name type="ordered locus">At1g66250</name>
    <name type="ORF">T6J19.7</name>
</gene>
<protein>
    <recommendedName>
        <fullName>Glucan endo-1,3-beta-glucosidase 2</fullName>
        <ecNumber>3.2.1.39</ecNumber>
    </recommendedName>
    <alternativeName>
        <fullName>(1-&gt;3)-beta-glucan endohydrolase 2</fullName>
        <shortName>(1-&gt;3)-beta-glucanase 2</shortName>
    </alternativeName>
    <alternativeName>
        <fullName>Beta-1,3-endoglucanase 2</fullName>
        <shortName>Beta-1,3-glucanase 2</shortName>
    </alternativeName>
</protein>
<keyword id="KW-1003">Cell membrane</keyword>
<keyword id="KW-1015">Disulfide bond</keyword>
<keyword id="KW-0325">Glycoprotein</keyword>
<keyword id="KW-0326">Glycosidase</keyword>
<keyword id="KW-0336">GPI-anchor</keyword>
<keyword id="KW-0378">Hydrolase</keyword>
<keyword id="KW-0449">Lipoprotein</keyword>
<keyword id="KW-0472">Membrane</keyword>
<keyword id="KW-0611">Plant defense</keyword>
<keyword id="KW-1185">Reference proteome</keyword>
<keyword id="KW-0732">Signal</keyword>
<proteinExistence type="evidence at transcript level"/>
<evidence type="ECO:0000250" key="1"/>
<evidence type="ECO:0000250" key="2">
    <source>
        <dbReference type="UniProtKB" id="O22317"/>
    </source>
</evidence>
<evidence type="ECO:0000255" key="3"/>
<evidence type="ECO:0000305" key="4"/>
<name>E132_ARATH</name>
<dbReference type="EC" id="3.2.1.39"/>
<dbReference type="EMBL" id="AC066691">
    <property type="protein sequence ID" value="AAG51762.1"/>
    <property type="status" value="ALT_SEQ"/>
    <property type="molecule type" value="Genomic_DNA"/>
</dbReference>
<dbReference type="EMBL" id="CP002684">
    <property type="protein sequence ID" value="AEE34485.1"/>
    <property type="molecule type" value="Genomic_DNA"/>
</dbReference>
<dbReference type="EMBL" id="BX814184">
    <property type="status" value="NOT_ANNOTATED_CDS"/>
    <property type="molecule type" value="mRNA"/>
</dbReference>
<dbReference type="PIR" id="E96687">
    <property type="entry name" value="E96687"/>
</dbReference>
<dbReference type="RefSeq" id="NP_176799.2">
    <property type="nucleotide sequence ID" value="NM_105296.3"/>
</dbReference>
<dbReference type="SMR" id="Q9C7U5"/>
<dbReference type="FunCoup" id="Q9C7U5">
    <property type="interactions" value="255"/>
</dbReference>
<dbReference type="STRING" id="3702.Q9C7U5"/>
<dbReference type="CAZy" id="CBM43">
    <property type="family name" value="Carbohydrate-Binding Module Family 43"/>
</dbReference>
<dbReference type="CAZy" id="GH17">
    <property type="family name" value="Glycoside Hydrolase Family 17"/>
</dbReference>
<dbReference type="GlyGen" id="Q9C7U5">
    <property type="glycosylation" value="9 sites"/>
</dbReference>
<dbReference type="PaxDb" id="3702-AT1G66250.1"/>
<dbReference type="ProteomicsDB" id="221954"/>
<dbReference type="EnsemblPlants" id="AT1G66250.1">
    <property type="protein sequence ID" value="AT1G66250.1"/>
    <property type="gene ID" value="AT1G66250"/>
</dbReference>
<dbReference type="GeneID" id="842942"/>
<dbReference type="Gramene" id="AT1G66250.1">
    <property type="protein sequence ID" value="AT1G66250.1"/>
    <property type="gene ID" value="AT1G66250"/>
</dbReference>
<dbReference type="KEGG" id="ath:AT1G66250"/>
<dbReference type="Araport" id="AT1G66250"/>
<dbReference type="TAIR" id="AT1G66250"/>
<dbReference type="eggNOG" id="ENOG502QUUJ">
    <property type="taxonomic scope" value="Eukaryota"/>
</dbReference>
<dbReference type="HOGENOM" id="CLU_024953_3_3_1"/>
<dbReference type="InParanoid" id="Q9C7U5"/>
<dbReference type="OMA" id="RSDLYYS"/>
<dbReference type="PhylomeDB" id="Q9C7U5"/>
<dbReference type="BioCyc" id="ARA:AT1G66250-MONOMER"/>
<dbReference type="PRO" id="PR:Q9C7U5"/>
<dbReference type="Proteomes" id="UP000006548">
    <property type="component" value="Chromosome 1"/>
</dbReference>
<dbReference type="ExpressionAtlas" id="Q9C7U5">
    <property type="expression patterns" value="baseline and differential"/>
</dbReference>
<dbReference type="GO" id="GO:0005886">
    <property type="term" value="C:plasma membrane"/>
    <property type="evidence" value="ECO:0007005"/>
    <property type="project" value="TAIR"/>
</dbReference>
<dbReference type="GO" id="GO:0098552">
    <property type="term" value="C:side of membrane"/>
    <property type="evidence" value="ECO:0007669"/>
    <property type="project" value="UniProtKB-KW"/>
</dbReference>
<dbReference type="GO" id="GO:0042973">
    <property type="term" value="F:glucan endo-1,3-beta-D-glucosidase activity"/>
    <property type="evidence" value="ECO:0007669"/>
    <property type="project" value="UniProtKB-EC"/>
</dbReference>
<dbReference type="GO" id="GO:0005975">
    <property type="term" value="P:carbohydrate metabolic process"/>
    <property type="evidence" value="ECO:0007669"/>
    <property type="project" value="InterPro"/>
</dbReference>
<dbReference type="GO" id="GO:0006952">
    <property type="term" value="P:defense response"/>
    <property type="evidence" value="ECO:0007669"/>
    <property type="project" value="UniProtKB-KW"/>
</dbReference>
<dbReference type="FunFam" id="3.20.20.80:FF:000002">
    <property type="entry name" value="Glucan endo-1,3-beta-glucosidase 3"/>
    <property type="match status" value="1"/>
</dbReference>
<dbReference type="FunFam" id="1.20.58.1040:FF:000001">
    <property type="entry name" value="Glucan endo-1,3-beta-glucosidase 4"/>
    <property type="match status" value="1"/>
</dbReference>
<dbReference type="Gene3D" id="1.20.58.1040">
    <property type="match status" value="1"/>
</dbReference>
<dbReference type="Gene3D" id="3.20.20.80">
    <property type="entry name" value="Glycosidases"/>
    <property type="match status" value="1"/>
</dbReference>
<dbReference type="InterPro" id="IPR000490">
    <property type="entry name" value="Glyco_hydro_17"/>
</dbReference>
<dbReference type="InterPro" id="IPR044965">
    <property type="entry name" value="Glyco_hydro_17_plant"/>
</dbReference>
<dbReference type="InterPro" id="IPR017853">
    <property type="entry name" value="Glycoside_hydrolase_SF"/>
</dbReference>
<dbReference type="InterPro" id="IPR012946">
    <property type="entry name" value="X8"/>
</dbReference>
<dbReference type="PANTHER" id="PTHR32227">
    <property type="entry name" value="GLUCAN ENDO-1,3-BETA-GLUCOSIDASE BG1-RELATED-RELATED"/>
    <property type="match status" value="1"/>
</dbReference>
<dbReference type="Pfam" id="PF00332">
    <property type="entry name" value="Glyco_hydro_17"/>
    <property type="match status" value="1"/>
</dbReference>
<dbReference type="Pfam" id="PF07983">
    <property type="entry name" value="X8"/>
    <property type="match status" value="1"/>
</dbReference>
<dbReference type="SMART" id="SM00768">
    <property type="entry name" value="X8"/>
    <property type="match status" value="1"/>
</dbReference>
<dbReference type="SUPFAM" id="SSF51445">
    <property type="entry name" value="(Trans)glycosidases"/>
    <property type="match status" value="1"/>
</dbReference>
<dbReference type="PROSITE" id="PS00587">
    <property type="entry name" value="GLYCOSYL_HYDROL_F17"/>
    <property type="match status" value="1"/>
</dbReference>
<comment type="catalytic activity">
    <reaction>
        <text>Hydrolysis of (1-&gt;3)-beta-D-glucosidic linkages in (1-&gt;3)-beta-D-glucans.</text>
        <dbReference type="EC" id="3.2.1.39"/>
    </reaction>
</comment>
<comment type="subcellular location">
    <subcellularLocation>
        <location>Cell membrane</location>
        <topology>Lipid-anchor</topology>
        <topology>GPI-anchor</topology>
    </subcellularLocation>
</comment>
<comment type="PTM">
    <text evidence="1">Contains two additional disulfide bonds.</text>
</comment>
<comment type="similarity">
    <text evidence="4">Belongs to the glycosyl hydrolase 17 family.</text>
</comment>
<comment type="sequence caution" evidence="4">
    <conflict type="erroneous gene model prediction">
        <sequence resource="EMBL-CDS" id="AAG51762"/>
    </conflict>
</comment>
<reference key="1">
    <citation type="journal article" date="2000" name="Nature">
        <title>Sequence and analysis of chromosome 1 of the plant Arabidopsis thaliana.</title>
        <authorList>
            <person name="Theologis A."/>
            <person name="Ecker J.R."/>
            <person name="Palm C.J."/>
            <person name="Federspiel N.A."/>
            <person name="Kaul S."/>
            <person name="White O."/>
            <person name="Alonso J."/>
            <person name="Altafi H."/>
            <person name="Araujo R."/>
            <person name="Bowman C.L."/>
            <person name="Brooks S.Y."/>
            <person name="Buehler E."/>
            <person name="Chan A."/>
            <person name="Chao Q."/>
            <person name="Chen H."/>
            <person name="Cheuk R.F."/>
            <person name="Chin C.W."/>
            <person name="Chung M.K."/>
            <person name="Conn L."/>
            <person name="Conway A.B."/>
            <person name="Conway A.R."/>
            <person name="Creasy T.H."/>
            <person name="Dewar K."/>
            <person name="Dunn P."/>
            <person name="Etgu P."/>
            <person name="Feldblyum T.V."/>
            <person name="Feng J.-D."/>
            <person name="Fong B."/>
            <person name="Fujii C.Y."/>
            <person name="Gill J.E."/>
            <person name="Goldsmith A.D."/>
            <person name="Haas B."/>
            <person name="Hansen N.F."/>
            <person name="Hughes B."/>
            <person name="Huizar L."/>
            <person name="Hunter J.L."/>
            <person name="Jenkins J."/>
            <person name="Johnson-Hopson C."/>
            <person name="Khan S."/>
            <person name="Khaykin E."/>
            <person name="Kim C.J."/>
            <person name="Koo H.L."/>
            <person name="Kremenetskaia I."/>
            <person name="Kurtz D.B."/>
            <person name="Kwan A."/>
            <person name="Lam B."/>
            <person name="Langin-Hooper S."/>
            <person name="Lee A."/>
            <person name="Lee J.M."/>
            <person name="Lenz C.A."/>
            <person name="Li J.H."/>
            <person name="Li Y.-P."/>
            <person name="Lin X."/>
            <person name="Liu S.X."/>
            <person name="Liu Z.A."/>
            <person name="Luros J.S."/>
            <person name="Maiti R."/>
            <person name="Marziali A."/>
            <person name="Militscher J."/>
            <person name="Miranda M."/>
            <person name="Nguyen M."/>
            <person name="Nierman W.C."/>
            <person name="Osborne B.I."/>
            <person name="Pai G."/>
            <person name="Peterson J."/>
            <person name="Pham P.K."/>
            <person name="Rizzo M."/>
            <person name="Rooney T."/>
            <person name="Rowley D."/>
            <person name="Sakano H."/>
            <person name="Salzberg S.L."/>
            <person name="Schwartz J.R."/>
            <person name="Shinn P."/>
            <person name="Southwick A.M."/>
            <person name="Sun H."/>
            <person name="Tallon L.J."/>
            <person name="Tambunga G."/>
            <person name="Toriumi M.J."/>
            <person name="Town C.D."/>
            <person name="Utterback T."/>
            <person name="Van Aken S."/>
            <person name="Vaysberg M."/>
            <person name="Vysotskaia V.S."/>
            <person name="Walker M."/>
            <person name="Wu D."/>
            <person name="Yu G."/>
            <person name="Fraser C.M."/>
            <person name="Venter J.C."/>
            <person name="Davis R.W."/>
        </authorList>
    </citation>
    <scope>NUCLEOTIDE SEQUENCE [LARGE SCALE GENOMIC DNA]</scope>
    <source>
        <strain>cv. Columbia</strain>
    </source>
</reference>
<reference key="2">
    <citation type="journal article" date="2017" name="Plant J.">
        <title>Araport11: a complete reannotation of the Arabidopsis thaliana reference genome.</title>
        <authorList>
            <person name="Cheng C.Y."/>
            <person name="Krishnakumar V."/>
            <person name="Chan A.P."/>
            <person name="Thibaud-Nissen F."/>
            <person name="Schobel S."/>
            <person name="Town C.D."/>
        </authorList>
    </citation>
    <scope>GENOME REANNOTATION</scope>
    <source>
        <strain>cv. Columbia</strain>
    </source>
</reference>
<reference key="3">
    <citation type="journal article" date="2004" name="Genome Res.">
        <title>Whole genome sequence comparisons and 'full-length' cDNA sequences: a combined approach to evaluate and improve Arabidopsis genome annotation.</title>
        <authorList>
            <person name="Castelli V."/>
            <person name="Aury J.-M."/>
            <person name="Jaillon O."/>
            <person name="Wincker P."/>
            <person name="Clepet C."/>
            <person name="Menard M."/>
            <person name="Cruaud C."/>
            <person name="Quetier F."/>
            <person name="Scarpelli C."/>
            <person name="Schaechter V."/>
            <person name="Temple G."/>
            <person name="Caboche M."/>
            <person name="Weissenbach J."/>
            <person name="Salanoubat M."/>
        </authorList>
    </citation>
    <scope>NUCLEOTIDE SEQUENCE [LARGE SCALE MRNA]</scope>
    <source>
        <strain>cv. Columbia</strain>
    </source>
</reference>